<comment type="function">
    <text evidence="1">Catalyzes the 2-thiolation of uridine at the wobble position (U34) of tRNA(Lys), tRNA(Glu) and tRNA(Gln), leading to the formation of s(2)U34, the first step of tRNA-mnm(5)s(2)U34 synthesis. Sulfur is provided by IscS, via a sulfur-relay system. Binds ATP and its substrate tRNAs.</text>
</comment>
<comment type="catalytic activity">
    <reaction evidence="1">
        <text>S-sulfanyl-L-cysteinyl-[protein] + uridine(34) in tRNA + AH2 + ATP = 2-thiouridine(34) in tRNA + L-cysteinyl-[protein] + A + AMP + diphosphate + H(+)</text>
        <dbReference type="Rhea" id="RHEA:47032"/>
        <dbReference type="Rhea" id="RHEA-COMP:10131"/>
        <dbReference type="Rhea" id="RHEA-COMP:11726"/>
        <dbReference type="Rhea" id="RHEA-COMP:11727"/>
        <dbReference type="Rhea" id="RHEA-COMP:11728"/>
        <dbReference type="ChEBI" id="CHEBI:13193"/>
        <dbReference type="ChEBI" id="CHEBI:15378"/>
        <dbReference type="ChEBI" id="CHEBI:17499"/>
        <dbReference type="ChEBI" id="CHEBI:29950"/>
        <dbReference type="ChEBI" id="CHEBI:30616"/>
        <dbReference type="ChEBI" id="CHEBI:33019"/>
        <dbReference type="ChEBI" id="CHEBI:61963"/>
        <dbReference type="ChEBI" id="CHEBI:65315"/>
        <dbReference type="ChEBI" id="CHEBI:87170"/>
        <dbReference type="ChEBI" id="CHEBI:456215"/>
        <dbReference type="EC" id="2.8.1.13"/>
    </reaction>
</comment>
<comment type="subunit">
    <text evidence="1">Interacts with TusE.</text>
</comment>
<comment type="subcellular location">
    <subcellularLocation>
        <location evidence="1">Cytoplasm</location>
    </subcellularLocation>
</comment>
<comment type="similarity">
    <text evidence="1">Belongs to the MnmA/TRMU family.</text>
</comment>
<accession>Q5PMJ4</accession>
<feature type="chain" id="PRO_0000121593" description="tRNA-specific 2-thiouridylase MnmA">
    <location>
        <begin position="1"/>
        <end position="368"/>
    </location>
</feature>
<feature type="region of interest" description="Interaction with target base in tRNA" evidence="1">
    <location>
        <begin position="97"/>
        <end position="99"/>
    </location>
</feature>
<feature type="region of interest" description="Interaction with tRNA" evidence="1">
    <location>
        <begin position="149"/>
        <end position="151"/>
    </location>
</feature>
<feature type="region of interest" description="Interaction with tRNA" evidence="1">
    <location>
        <begin position="311"/>
        <end position="312"/>
    </location>
</feature>
<feature type="active site" description="Nucleophile" evidence="1">
    <location>
        <position position="102"/>
    </location>
</feature>
<feature type="active site" description="Cysteine persulfide intermediate" evidence="1">
    <location>
        <position position="199"/>
    </location>
</feature>
<feature type="binding site" evidence="1">
    <location>
        <begin position="11"/>
        <end position="18"/>
    </location>
    <ligand>
        <name>ATP</name>
        <dbReference type="ChEBI" id="CHEBI:30616"/>
    </ligand>
</feature>
<feature type="binding site" evidence="1">
    <location>
        <position position="37"/>
    </location>
    <ligand>
        <name>ATP</name>
        <dbReference type="ChEBI" id="CHEBI:30616"/>
    </ligand>
</feature>
<feature type="binding site" evidence="1">
    <location>
        <position position="127"/>
    </location>
    <ligand>
        <name>ATP</name>
        <dbReference type="ChEBI" id="CHEBI:30616"/>
    </ligand>
</feature>
<feature type="site" description="Interaction with tRNA" evidence="1">
    <location>
        <position position="128"/>
    </location>
</feature>
<feature type="site" description="Interaction with tRNA" evidence="1">
    <location>
        <position position="344"/>
    </location>
</feature>
<feature type="disulfide bond" description="Alternate" evidence="1">
    <location>
        <begin position="102"/>
        <end position="199"/>
    </location>
</feature>
<protein>
    <recommendedName>
        <fullName evidence="1">tRNA-specific 2-thiouridylase MnmA</fullName>
        <ecNumber evidence="1">2.8.1.13</ecNumber>
    </recommendedName>
</protein>
<reference key="1">
    <citation type="journal article" date="2004" name="Nat. Genet.">
        <title>Comparison of genome degradation in Paratyphi A and Typhi, human-restricted serovars of Salmonella enterica that cause typhoid.</title>
        <authorList>
            <person name="McClelland M."/>
            <person name="Sanderson K.E."/>
            <person name="Clifton S.W."/>
            <person name="Latreille P."/>
            <person name="Porwollik S."/>
            <person name="Sabo A."/>
            <person name="Meyer R."/>
            <person name="Bieri T."/>
            <person name="Ozersky P."/>
            <person name="McLellan M."/>
            <person name="Harkins C.R."/>
            <person name="Wang C."/>
            <person name="Nguyen C."/>
            <person name="Berghoff A."/>
            <person name="Elliott G."/>
            <person name="Kohlberg S."/>
            <person name="Strong C."/>
            <person name="Du F."/>
            <person name="Carter J."/>
            <person name="Kremizki C."/>
            <person name="Layman D."/>
            <person name="Leonard S."/>
            <person name="Sun H."/>
            <person name="Fulton L."/>
            <person name="Nash W."/>
            <person name="Miner T."/>
            <person name="Minx P."/>
            <person name="Delehaunty K."/>
            <person name="Fronick C."/>
            <person name="Magrini V."/>
            <person name="Nhan M."/>
            <person name="Warren W."/>
            <person name="Florea L."/>
            <person name="Spieth J."/>
            <person name="Wilson R.K."/>
        </authorList>
    </citation>
    <scope>NUCLEOTIDE SEQUENCE [LARGE SCALE GENOMIC DNA]</scope>
    <source>
        <strain>ATCC 9150 / SARB42</strain>
    </source>
</reference>
<dbReference type="EC" id="2.8.1.13" evidence="1"/>
<dbReference type="EMBL" id="CP000026">
    <property type="protein sequence ID" value="AAV77543.1"/>
    <property type="molecule type" value="Genomic_DNA"/>
</dbReference>
<dbReference type="RefSeq" id="WP_000004540.1">
    <property type="nucleotide sequence ID" value="NC_006511.1"/>
</dbReference>
<dbReference type="SMR" id="Q5PMJ4"/>
<dbReference type="KEGG" id="spt:SPA1616"/>
<dbReference type="HOGENOM" id="CLU_035188_1_0_6"/>
<dbReference type="Proteomes" id="UP000008185">
    <property type="component" value="Chromosome"/>
</dbReference>
<dbReference type="GO" id="GO:0005737">
    <property type="term" value="C:cytoplasm"/>
    <property type="evidence" value="ECO:0007669"/>
    <property type="project" value="UniProtKB-SubCell"/>
</dbReference>
<dbReference type="GO" id="GO:0005524">
    <property type="term" value="F:ATP binding"/>
    <property type="evidence" value="ECO:0007669"/>
    <property type="project" value="UniProtKB-KW"/>
</dbReference>
<dbReference type="GO" id="GO:0000049">
    <property type="term" value="F:tRNA binding"/>
    <property type="evidence" value="ECO:0007669"/>
    <property type="project" value="UniProtKB-KW"/>
</dbReference>
<dbReference type="GO" id="GO:0103016">
    <property type="term" value="F:tRNA-uridine 2-sulfurtransferase activity"/>
    <property type="evidence" value="ECO:0007669"/>
    <property type="project" value="UniProtKB-EC"/>
</dbReference>
<dbReference type="GO" id="GO:0002143">
    <property type="term" value="P:tRNA wobble position uridine thiolation"/>
    <property type="evidence" value="ECO:0007669"/>
    <property type="project" value="TreeGrafter"/>
</dbReference>
<dbReference type="CDD" id="cd01998">
    <property type="entry name" value="MnmA_TRMU-like"/>
    <property type="match status" value="1"/>
</dbReference>
<dbReference type="FunFam" id="2.30.30.280:FF:000001">
    <property type="entry name" value="tRNA-specific 2-thiouridylase MnmA"/>
    <property type="match status" value="1"/>
</dbReference>
<dbReference type="FunFam" id="2.40.30.10:FF:000023">
    <property type="entry name" value="tRNA-specific 2-thiouridylase MnmA"/>
    <property type="match status" value="1"/>
</dbReference>
<dbReference type="FunFam" id="3.40.50.620:FF:000004">
    <property type="entry name" value="tRNA-specific 2-thiouridylase MnmA"/>
    <property type="match status" value="1"/>
</dbReference>
<dbReference type="Gene3D" id="2.30.30.280">
    <property type="entry name" value="Adenine nucleotide alpha hydrolases-like domains"/>
    <property type="match status" value="1"/>
</dbReference>
<dbReference type="Gene3D" id="3.40.50.620">
    <property type="entry name" value="HUPs"/>
    <property type="match status" value="1"/>
</dbReference>
<dbReference type="Gene3D" id="2.40.30.10">
    <property type="entry name" value="Translation factors"/>
    <property type="match status" value="1"/>
</dbReference>
<dbReference type="HAMAP" id="MF_00144">
    <property type="entry name" value="tRNA_thiouridyl_MnmA"/>
    <property type="match status" value="1"/>
</dbReference>
<dbReference type="InterPro" id="IPR004506">
    <property type="entry name" value="MnmA-like"/>
</dbReference>
<dbReference type="InterPro" id="IPR046885">
    <property type="entry name" value="MnmA-like_C"/>
</dbReference>
<dbReference type="InterPro" id="IPR046884">
    <property type="entry name" value="MnmA-like_central"/>
</dbReference>
<dbReference type="InterPro" id="IPR023382">
    <property type="entry name" value="MnmA-like_central_sf"/>
</dbReference>
<dbReference type="InterPro" id="IPR014729">
    <property type="entry name" value="Rossmann-like_a/b/a_fold"/>
</dbReference>
<dbReference type="NCBIfam" id="NF001138">
    <property type="entry name" value="PRK00143.1"/>
    <property type="match status" value="1"/>
</dbReference>
<dbReference type="NCBIfam" id="TIGR00420">
    <property type="entry name" value="trmU"/>
    <property type="match status" value="1"/>
</dbReference>
<dbReference type="PANTHER" id="PTHR11933:SF5">
    <property type="entry name" value="MITOCHONDRIAL TRNA-SPECIFIC 2-THIOURIDYLASE 1"/>
    <property type="match status" value="1"/>
</dbReference>
<dbReference type="PANTHER" id="PTHR11933">
    <property type="entry name" value="TRNA 5-METHYLAMINOMETHYL-2-THIOURIDYLATE -METHYLTRANSFERASE"/>
    <property type="match status" value="1"/>
</dbReference>
<dbReference type="Pfam" id="PF03054">
    <property type="entry name" value="tRNA_Me_trans"/>
    <property type="match status" value="1"/>
</dbReference>
<dbReference type="Pfam" id="PF20258">
    <property type="entry name" value="tRNA_Me_trans_C"/>
    <property type="match status" value="1"/>
</dbReference>
<dbReference type="Pfam" id="PF20259">
    <property type="entry name" value="tRNA_Me_trans_M"/>
    <property type="match status" value="1"/>
</dbReference>
<dbReference type="SUPFAM" id="SSF52402">
    <property type="entry name" value="Adenine nucleotide alpha hydrolases-like"/>
    <property type="match status" value="1"/>
</dbReference>
<keyword id="KW-0067">ATP-binding</keyword>
<keyword id="KW-0963">Cytoplasm</keyword>
<keyword id="KW-1015">Disulfide bond</keyword>
<keyword id="KW-0547">Nucleotide-binding</keyword>
<keyword id="KW-0694">RNA-binding</keyword>
<keyword id="KW-0808">Transferase</keyword>
<keyword id="KW-0819">tRNA processing</keyword>
<keyword id="KW-0820">tRNA-binding</keyword>
<organism>
    <name type="scientific">Salmonella paratyphi A (strain ATCC 9150 / SARB42)</name>
    <dbReference type="NCBI Taxonomy" id="295319"/>
    <lineage>
        <taxon>Bacteria</taxon>
        <taxon>Pseudomonadati</taxon>
        <taxon>Pseudomonadota</taxon>
        <taxon>Gammaproteobacteria</taxon>
        <taxon>Enterobacterales</taxon>
        <taxon>Enterobacteriaceae</taxon>
        <taxon>Salmonella</taxon>
    </lineage>
</organism>
<proteinExistence type="inferred from homology"/>
<gene>
    <name evidence="1" type="primary">mnmA</name>
    <name type="synonym">trmU</name>
    <name type="ordered locus">SPA1616</name>
</gene>
<name>MNMA_SALPA</name>
<evidence type="ECO:0000255" key="1">
    <source>
        <dbReference type="HAMAP-Rule" id="MF_00144"/>
    </source>
</evidence>
<sequence length="368" mass="40871">MSESPKKVIVGMSGGVDSSVSAWLLQQQGYQVEGLFMKNWEEDDGEEYCTAAADLADAQAVCDKLGIELHTVNFAAEYWDNVFELFLEEYKAGRTPNPDILCNKEIKFKAFLEFAAEDLGADYIATGHYVRRADVNGKSRLLRGLDGNKDQSYFLYTLGHEQIAQSLFPVGELEKPQVRKIAEDLGLVTAKKKDSTGICFIGERKFRDFLGRYLPAQPGKIITVDGDEIGEHQGLMYHTLGQRKGLGIGGTKDGSEDPWYVVDKDVENNVLIVAQGHEHPRLMSVGLIAQQLHWVDREPFTGTLRCTVKTRYRQTDIPCTINALDDDRIEVIFDEPVAAVTPGQSAVFYSGEVCLGGGIIEQRLPLTV</sequence>